<feature type="chain" id="PRO_0000254806" description="Cytochrome b">
    <location>
        <begin position="1"/>
        <end position="379"/>
    </location>
</feature>
<feature type="transmembrane region" description="Helical" evidence="2">
    <location>
        <begin position="33"/>
        <end position="53"/>
    </location>
</feature>
<feature type="transmembrane region" description="Helical" evidence="2">
    <location>
        <begin position="77"/>
        <end position="98"/>
    </location>
</feature>
<feature type="transmembrane region" description="Helical" evidence="2">
    <location>
        <begin position="113"/>
        <end position="133"/>
    </location>
</feature>
<feature type="transmembrane region" description="Helical" evidence="2">
    <location>
        <begin position="178"/>
        <end position="198"/>
    </location>
</feature>
<feature type="transmembrane region" description="Helical" evidence="2">
    <location>
        <begin position="226"/>
        <end position="246"/>
    </location>
</feature>
<feature type="transmembrane region" description="Helical" evidence="2">
    <location>
        <begin position="288"/>
        <end position="308"/>
    </location>
</feature>
<feature type="transmembrane region" description="Helical" evidence="2">
    <location>
        <begin position="320"/>
        <end position="340"/>
    </location>
</feature>
<feature type="transmembrane region" description="Helical" evidence="2">
    <location>
        <begin position="347"/>
        <end position="367"/>
    </location>
</feature>
<feature type="binding site" description="axial binding residue" evidence="2">
    <location>
        <position position="83"/>
    </location>
    <ligand>
        <name>heme b</name>
        <dbReference type="ChEBI" id="CHEBI:60344"/>
        <label>b562</label>
    </ligand>
    <ligandPart>
        <name>Fe</name>
        <dbReference type="ChEBI" id="CHEBI:18248"/>
    </ligandPart>
</feature>
<feature type="binding site" description="axial binding residue" evidence="2">
    <location>
        <position position="97"/>
    </location>
    <ligand>
        <name>heme b</name>
        <dbReference type="ChEBI" id="CHEBI:60344"/>
        <label>b566</label>
    </ligand>
    <ligandPart>
        <name>Fe</name>
        <dbReference type="ChEBI" id="CHEBI:18248"/>
    </ligandPart>
</feature>
<feature type="binding site" description="axial binding residue" evidence="2">
    <location>
        <position position="182"/>
    </location>
    <ligand>
        <name>heme b</name>
        <dbReference type="ChEBI" id="CHEBI:60344"/>
        <label>b562</label>
    </ligand>
    <ligandPart>
        <name>Fe</name>
        <dbReference type="ChEBI" id="CHEBI:18248"/>
    </ligandPart>
</feature>
<feature type="binding site" description="axial binding residue" evidence="2">
    <location>
        <position position="196"/>
    </location>
    <ligand>
        <name>heme b</name>
        <dbReference type="ChEBI" id="CHEBI:60344"/>
        <label>b566</label>
    </ligand>
    <ligandPart>
        <name>Fe</name>
        <dbReference type="ChEBI" id="CHEBI:18248"/>
    </ligandPart>
</feature>
<feature type="binding site" evidence="2">
    <location>
        <position position="201"/>
    </location>
    <ligand>
        <name>a ubiquinone</name>
        <dbReference type="ChEBI" id="CHEBI:16389"/>
    </ligand>
</feature>
<proteinExistence type="inferred from homology"/>
<name>CYB_GRAGR</name>
<accession>Q9T4U3</accession>
<evidence type="ECO:0000250" key="1"/>
<evidence type="ECO:0000250" key="2">
    <source>
        <dbReference type="UniProtKB" id="P00157"/>
    </source>
</evidence>
<evidence type="ECO:0000255" key="3">
    <source>
        <dbReference type="PROSITE-ProRule" id="PRU00967"/>
    </source>
</evidence>
<evidence type="ECO:0000255" key="4">
    <source>
        <dbReference type="PROSITE-ProRule" id="PRU00968"/>
    </source>
</evidence>
<gene>
    <name type="primary">MT-CYB</name>
    <name type="synonym">COB</name>
    <name type="synonym">CYTB</name>
    <name type="synonym">MTCYB</name>
</gene>
<reference key="1">
    <citation type="journal article" date="1999" name="Mar. Mamm. Sci.">
        <title>Phylogenetic relationships among the delphinid cetaceans based on full cytochrome b sequences.</title>
        <authorList>
            <person name="LeDuc R.G."/>
            <person name="Perrin W.F."/>
            <person name="Dizon A.E."/>
        </authorList>
    </citation>
    <scope>NUCLEOTIDE SEQUENCE [GENOMIC DNA]</scope>
</reference>
<dbReference type="EMBL" id="AF084059">
    <property type="protein sequence ID" value="AAD54436.1"/>
    <property type="molecule type" value="Genomic_DNA"/>
</dbReference>
<dbReference type="EMBL" id="AF084058">
    <property type="protein sequence ID" value="AAD54435.1"/>
    <property type="molecule type" value="Genomic_DNA"/>
</dbReference>
<dbReference type="RefSeq" id="YP_002587111.1">
    <property type="nucleotide sequence ID" value="NC_012062.1"/>
</dbReference>
<dbReference type="SMR" id="Q9T4U3"/>
<dbReference type="GeneID" id="7412072"/>
<dbReference type="CTD" id="4519"/>
<dbReference type="GO" id="GO:0005743">
    <property type="term" value="C:mitochondrial inner membrane"/>
    <property type="evidence" value="ECO:0007669"/>
    <property type="project" value="UniProtKB-SubCell"/>
</dbReference>
<dbReference type="GO" id="GO:0045275">
    <property type="term" value="C:respiratory chain complex III"/>
    <property type="evidence" value="ECO:0007669"/>
    <property type="project" value="InterPro"/>
</dbReference>
<dbReference type="GO" id="GO:0046872">
    <property type="term" value="F:metal ion binding"/>
    <property type="evidence" value="ECO:0007669"/>
    <property type="project" value="UniProtKB-KW"/>
</dbReference>
<dbReference type="GO" id="GO:0008121">
    <property type="term" value="F:ubiquinol-cytochrome-c reductase activity"/>
    <property type="evidence" value="ECO:0007669"/>
    <property type="project" value="InterPro"/>
</dbReference>
<dbReference type="GO" id="GO:0006122">
    <property type="term" value="P:mitochondrial electron transport, ubiquinol to cytochrome c"/>
    <property type="evidence" value="ECO:0007669"/>
    <property type="project" value="TreeGrafter"/>
</dbReference>
<dbReference type="CDD" id="cd00290">
    <property type="entry name" value="cytochrome_b_C"/>
    <property type="match status" value="1"/>
</dbReference>
<dbReference type="CDD" id="cd00284">
    <property type="entry name" value="Cytochrome_b_N"/>
    <property type="match status" value="1"/>
</dbReference>
<dbReference type="FunFam" id="1.20.810.10:FF:000002">
    <property type="entry name" value="Cytochrome b"/>
    <property type="match status" value="1"/>
</dbReference>
<dbReference type="Gene3D" id="1.20.810.10">
    <property type="entry name" value="Cytochrome Bc1 Complex, Chain C"/>
    <property type="match status" value="1"/>
</dbReference>
<dbReference type="InterPro" id="IPR005798">
    <property type="entry name" value="Cyt_b/b6_C"/>
</dbReference>
<dbReference type="InterPro" id="IPR036150">
    <property type="entry name" value="Cyt_b/b6_C_sf"/>
</dbReference>
<dbReference type="InterPro" id="IPR005797">
    <property type="entry name" value="Cyt_b/b6_N"/>
</dbReference>
<dbReference type="InterPro" id="IPR027387">
    <property type="entry name" value="Cytb/b6-like_sf"/>
</dbReference>
<dbReference type="InterPro" id="IPR030689">
    <property type="entry name" value="Cytochrome_b"/>
</dbReference>
<dbReference type="InterPro" id="IPR048260">
    <property type="entry name" value="Cytochrome_b_C_euk/bac"/>
</dbReference>
<dbReference type="InterPro" id="IPR048259">
    <property type="entry name" value="Cytochrome_b_N_euk/bac"/>
</dbReference>
<dbReference type="InterPro" id="IPR016174">
    <property type="entry name" value="Di-haem_cyt_TM"/>
</dbReference>
<dbReference type="PANTHER" id="PTHR19271">
    <property type="entry name" value="CYTOCHROME B"/>
    <property type="match status" value="1"/>
</dbReference>
<dbReference type="PANTHER" id="PTHR19271:SF16">
    <property type="entry name" value="CYTOCHROME B"/>
    <property type="match status" value="1"/>
</dbReference>
<dbReference type="Pfam" id="PF00032">
    <property type="entry name" value="Cytochrom_B_C"/>
    <property type="match status" value="1"/>
</dbReference>
<dbReference type="Pfam" id="PF00033">
    <property type="entry name" value="Cytochrome_B"/>
    <property type="match status" value="1"/>
</dbReference>
<dbReference type="PIRSF" id="PIRSF038885">
    <property type="entry name" value="COB"/>
    <property type="match status" value="1"/>
</dbReference>
<dbReference type="SUPFAM" id="SSF81648">
    <property type="entry name" value="a domain/subunit of cytochrome bc1 complex (Ubiquinol-cytochrome c reductase)"/>
    <property type="match status" value="1"/>
</dbReference>
<dbReference type="SUPFAM" id="SSF81342">
    <property type="entry name" value="Transmembrane di-heme cytochromes"/>
    <property type="match status" value="1"/>
</dbReference>
<dbReference type="PROSITE" id="PS51003">
    <property type="entry name" value="CYTB_CTER"/>
    <property type="match status" value="1"/>
</dbReference>
<dbReference type="PROSITE" id="PS51002">
    <property type="entry name" value="CYTB_NTER"/>
    <property type="match status" value="1"/>
</dbReference>
<sequence>MTNIRKTHPLMKIINNAFIDLPTPSNISSWWNFGSLLGLCLIMQILTGLFLAMHYTPDTSTAFSSVAHICRDVNYGWFIRYLHANGASMFFICLYAHIGRGLYYGSYMFQETWNIGVLLLLTVMATAFVGYVLPWGQMSFWGATVITNLLSAIPYIGTTLVEWIWGGFSVDKATLTRFFAFHFILPFIITALVAVHLLFLHETGSNNPTGIPSNMDMIPFHPYYTIKDILGALLLILTLLTLTLFTPDLLGDPDNYTPANPLSTPAHIKPEWYFLFAYAILRSIPNKLGGVLALLLSILILIFIPMLQTSKQRSMMFRPFSQLLFWTLIADLLTLTWIGGQPVEHPYIIVGQLASILYFLLILVLMPTISLIENKLLKW</sequence>
<protein>
    <recommendedName>
        <fullName>Cytochrome b</fullName>
    </recommendedName>
    <alternativeName>
        <fullName>Complex III subunit 3</fullName>
    </alternativeName>
    <alternativeName>
        <fullName>Complex III subunit III</fullName>
    </alternativeName>
    <alternativeName>
        <fullName>Cytochrome b-c1 complex subunit 3</fullName>
    </alternativeName>
    <alternativeName>
        <fullName>Ubiquinol-cytochrome-c reductase complex cytochrome b subunit</fullName>
    </alternativeName>
</protein>
<keyword id="KW-0249">Electron transport</keyword>
<keyword id="KW-0349">Heme</keyword>
<keyword id="KW-0408">Iron</keyword>
<keyword id="KW-0472">Membrane</keyword>
<keyword id="KW-0479">Metal-binding</keyword>
<keyword id="KW-0496">Mitochondrion</keyword>
<keyword id="KW-0999">Mitochondrion inner membrane</keyword>
<keyword id="KW-0679">Respiratory chain</keyword>
<keyword id="KW-0812">Transmembrane</keyword>
<keyword id="KW-1133">Transmembrane helix</keyword>
<keyword id="KW-0813">Transport</keyword>
<keyword id="KW-0830">Ubiquinone</keyword>
<geneLocation type="mitochondrion"/>
<organism>
    <name type="scientific">Grampus griseus</name>
    <name type="common">Risso's dolphin</name>
    <name type="synonym">Delphinus griseus</name>
    <dbReference type="NCBI Taxonomy" id="83653"/>
    <lineage>
        <taxon>Eukaryota</taxon>
        <taxon>Metazoa</taxon>
        <taxon>Chordata</taxon>
        <taxon>Craniata</taxon>
        <taxon>Vertebrata</taxon>
        <taxon>Euteleostomi</taxon>
        <taxon>Mammalia</taxon>
        <taxon>Eutheria</taxon>
        <taxon>Laurasiatheria</taxon>
        <taxon>Artiodactyla</taxon>
        <taxon>Whippomorpha</taxon>
        <taxon>Cetacea</taxon>
        <taxon>Odontoceti</taxon>
        <taxon>Delphinidae</taxon>
        <taxon>Grampus</taxon>
    </lineage>
</organism>
<comment type="function">
    <text evidence="2">Component of the ubiquinol-cytochrome c reductase complex (complex III or cytochrome b-c1 complex) that is part of the mitochondrial respiratory chain. The b-c1 complex mediates electron transfer from ubiquinol to cytochrome c. Contributes to the generation of a proton gradient across the mitochondrial membrane that is then used for ATP synthesis.</text>
</comment>
<comment type="cofactor">
    <cofactor evidence="2">
        <name>heme b</name>
        <dbReference type="ChEBI" id="CHEBI:60344"/>
    </cofactor>
    <text evidence="2">Binds 2 heme b groups non-covalently.</text>
</comment>
<comment type="subunit">
    <text evidence="2">The cytochrome bc1 complex contains 11 subunits: 3 respiratory subunits (MT-CYB, CYC1 and UQCRFS1), 2 core proteins (UQCRC1 and UQCRC2) and 6 low-molecular weight proteins (UQCRH/QCR6, UQCRB/QCR7, UQCRQ/QCR8, UQCR10/QCR9, UQCR11/QCR10 and a cleavage product of UQCRFS1). This cytochrome bc1 complex then forms a dimer.</text>
</comment>
<comment type="subcellular location">
    <subcellularLocation>
        <location evidence="2">Mitochondrion inner membrane</location>
        <topology evidence="2">Multi-pass membrane protein</topology>
    </subcellularLocation>
</comment>
<comment type="miscellaneous">
    <text evidence="1">Heme 1 (or BL or b562) is low-potential and absorbs at about 562 nm, and heme 2 (or BH or b566) is high-potential and absorbs at about 566 nm.</text>
</comment>
<comment type="similarity">
    <text evidence="3 4">Belongs to the cytochrome b family.</text>
</comment>
<comment type="caution">
    <text evidence="2">The full-length protein contains only eight transmembrane helices, not nine as predicted by bioinformatics tools.</text>
</comment>